<reference key="1">
    <citation type="journal article" date="2011" name="PLoS ONE">
        <title>The genome of Akkermansia muciniphila, a dedicated intestinal mucin degrader, and its use in exploring intestinal metagenomes.</title>
        <authorList>
            <person name="van Passel M.W."/>
            <person name="Kant R."/>
            <person name="Zoetendal E.G."/>
            <person name="Plugge C.M."/>
            <person name="Derrien M."/>
            <person name="Malfatti S.A."/>
            <person name="Chain P.S."/>
            <person name="Woyke T."/>
            <person name="Palva A."/>
            <person name="de Vos W.M."/>
            <person name="Smidt H."/>
        </authorList>
    </citation>
    <scope>NUCLEOTIDE SEQUENCE [LARGE SCALE GENOMIC DNA]</scope>
    <source>
        <strain>ATCC BAA-835 / DSM 22959 / JCM 33894 / BCRC 81048 / CCUG 64013 / CIP 107961 / Muc</strain>
    </source>
</reference>
<gene>
    <name evidence="1" type="primary">rpsU</name>
    <name type="ordered locus">Amuc_0416</name>
</gene>
<proteinExistence type="inferred from homology"/>
<organism>
    <name type="scientific">Akkermansia muciniphila (strain ATCC BAA-835 / DSM 22959 / JCM 33894 / BCRC 81048 / CCUG 64013 / CIP 107961 / Muc)</name>
    <dbReference type="NCBI Taxonomy" id="349741"/>
    <lineage>
        <taxon>Bacteria</taxon>
        <taxon>Pseudomonadati</taxon>
        <taxon>Verrucomicrobiota</taxon>
        <taxon>Verrucomicrobiia</taxon>
        <taxon>Verrucomicrobiales</taxon>
        <taxon>Akkermansiaceae</taxon>
        <taxon>Akkermansia</taxon>
    </lineage>
</organism>
<dbReference type="EMBL" id="CP001071">
    <property type="protein sequence ID" value="ACD04254.1"/>
    <property type="molecule type" value="Genomic_DNA"/>
</dbReference>
<dbReference type="RefSeq" id="WP_012419469.1">
    <property type="nucleotide sequence ID" value="NZ_CP071807.1"/>
</dbReference>
<dbReference type="SMR" id="B2UNE2"/>
<dbReference type="STRING" id="349741.Amuc_0416"/>
<dbReference type="PaxDb" id="349741-Amuc_0416"/>
<dbReference type="GeneID" id="60879881"/>
<dbReference type="KEGG" id="amu:Amuc_0416"/>
<dbReference type="eggNOG" id="COG0828">
    <property type="taxonomic scope" value="Bacteria"/>
</dbReference>
<dbReference type="HOGENOM" id="CLU_159258_2_2_0"/>
<dbReference type="OrthoDB" id="9799244at2"/>
<dbReference type="BioCyc" id="AMUC349741:G1GBX-460-MONOMER"/>
<dbReference type="Proteomes" id="UP000001031">
    <property type="component" value="Chromosome"/>
</dbReference>
<dbReference type="GO" id="GO:1990904">
    <property type="term" value="C:ribonucleoprotein complex"/>
    <property type="evidence" value="ECO:0007669"/>
    <property type="project" value="UniProtKB-KW"/>
</dbReference>
<dbReference type="GO" id="GO:0005840">
    <property type="term" value="C:ribosome"/>
    <property type="evidence" value="ECO:0007669"/>
    <property type="project" value="UniProtKB-KW"/>
</dbReference>
<dbReference type="GO" id="GO:0003735">
    <property type="term" value="F:structural constituent of ribosome"/>
    <property type="evidence" value="ECO:0007669"/>
    <property type="project" value="InterPro"/>
</dbReference>
<dbReference type="GO" id="GO:0006412">
    <property type="term" value="P:translation"/>
    <property type="evidence" value="ECO:0007669"/>
    <property type="project" value="UniProtKB-UniRule"/>
</dbReference>
<dbReference type="Gene3D" id="1.20.5.1150">
    <property type="entry name" value="Ribosomal protein S8"/>
    <property type="match status" value="1"/>
</dbReference>
<dbReference type="HAMAP" id="MF_00358">
    <property type="entry name" value="Ribosomal_bS21"/>
    <property type="match status" value="1"/>
</dbReference>
<dbReference type="InterPro" id="IPR001911">
    <property type="entry name" value="Ribosomal_bS21"/>
</dbReference>
<dbReference type="InterPro" id="IPR038380">
    <property type="entry name" value="Ribosomal_bS21_sf"/>
</dbReference>
<dbReference type="NCBIfam" id="TIGR00030">
    <property type="entry name" value="S21p"/>
    <property type="match status" value="1"/>
</dbReference>
<dbReference type="PANTHER" id="PTHR21109">
    <property type="entry name" value="MITOCHONDRIAL 28S RIBOSOMAL PROTEIN S21"/>
    <property type="match status" value="1"/>
</dbReference>
<dbReference type="PANTHER" id="PTHR21109:SF0">
    <property type="entry name" value="SMALL RIBOSOMAL SUBUNIT PROTEIN BS21M"/>
    <property type="match status" value="1"/>
</dbReference>
<dbReference type="Pfam" id="PF01165">
    <property type="entry name" value="Ribosomal_S21"/>
    <property type="match status" value="1"/>
</dbReference>
<dbReference type="PRINTS" id="PR00976">
    <property type="entry name" value="RIBOSOMALS21"/>
</dbReference>
<evidence type="ECO:0000255" key="1">
    <source>
        <dbReference type="HAMAP-Rule" id="MF_00358"/>
    </source>
</evidence>
<evidence type="ECO:0000256" key="2">
    <source>
        <dbReference type="SAM" id="MobiDB-lite"/>
    </source>
</evidence>
<evidence type="ECO:0000305" key="3"/>
<name>RS21_AKKM8</name>
<accession>B2UNE2</accession>
<feature type="chain" id="PRO_1000120579" description="Small ribosomal subunit protein bS21">
    <location>
        <begin position="1"/>
        <end position="83"/>
    </location>
</feature>
<feature type="region of interest" description="Disordered" evidence="2">
    <location>
        <begin position="40"/>
        <end position="83"/>
    </location>
</feature>
<feature type="compositionally biased region" description="Basic residues" evidence="2">
    <location>
        <begin position="47"/>
        <end position="62"/>
    </location>
</feature>
<feature type="compositionally biased region" description="Low complexity" evidence="2">
    <location>
        <begin position="71"/>
        <end position="83"/>
    </location>
</feature>
<comment type="similarity">
    <text evidence="1">Belongs to the bacterial ribosomal protein bS21 family.</text>
</comment>
<protein>
    <recommendedName>
        <fullName evidence="1">Small ribosomal subunit protein bS21</fullName>
    </recommendedName>
    <alternativeName>
        <fullName evidence="3">30S ribosomal protein S21</fullName>
    </alternativeName>
</protein>
<keyword id="KW-1185">Reference proteome</keyword>
<keyword id="KW-0687">Ribonucleoprotein</keyword>
<keyword id="KW-0689">Ribosomal protein</keyword>
<sequence>MREVTVRKGEPIDRALKRLKTKLDVEGILDEMRRRRAFETPMDERRRKARSASKRNKVKWRYSNKSEETASETAETPASAPEA</sequence>